<evidence type="ECO:0000250" key="1">
    <source>
        <dbReference type="UniProtKB" id="P04628"/>
    </source>
</evidence>
<evidence type="ECO:0000250" key="2">
    <source>
        <dbReference type="UniProtKB" id="P09615"/>
    </source>
</evidence>
<evidence type="ECO:0000250" key="3">
    <source>
        <dbReference type="UniProtKB" id="P28026"/>
    </source>
</evidence>
<evidence type="ECO:0000250" key="4">
    <source>
        <dbReference type="UniProtKB" id="P56704"/>
    </source>
</evidence>
<evidence type="ECO:0000250" key="5">
    <source>
        <dbReference type="UniProtKB" id="Q91029"/>
    </source>
</evidence>
<evidence type="ECO:0000255" key="6"/>
<evidence type="ECO:0000305" key="7"/>
<gene>
    <name type="primary">WNT-1</name>
</gene>
<keyword id="KW-0217">Developmental protein</keyword>
<keyword id="KW-1015">Disulfide bond</keyword>
<keyword id="KW-0272">Extracellular matrix</keyword>
<keyword id="KW-0325">Glycoprotein</keyword>
<keyword id="KW-0449">Lipoprotein</keyword>
<keyword id="KW-1185">Reference proteome</keyword>
<keyword id="KW-0964">Secreted</keyword>
<keyword id="KW-0732">Signal</keyword>
<keyword id="KW-0879">Wnt signaling pathway</keyword>
<sequence>MKCLWLLVITVLCLRCDTAGTKPRRGRGSMWWGIAKAGEPNNLSPVSPGVLFMDPAVHATLRRKQRRLARENPGVLAAVAKAQYAFAECQHQFKYRRWNCSTRNFLRGKNLFGKIVDRGCRETAFIYAITSAGVTHSLARACREASIESCTCDYSHRPRAAQNPVGGRANVRVWKWGGCSDNIGFGFRFSREFVDTGERGKTLREKMNLHNNEAGRRHVQTEMKQECKCHGMSGSCTVKTCWMRLPSFRSVGDSLKDRFDGASRVMLSKADVETPAQRNEAAPHRVPRKDRYRFQLRPHNPDHKSPGVKDLVYLESSPGFCEKNPRLGIPGTHGRACNDTSIGVDGCDLMCCGRGYKTNTMFVVERCNCTFHWCCEVKCKLCRTEKVVHTCL</sequence>
<comment type="function">
    <text evidence="5">Ligand for members of the frizzled family of seven transmembrane receptors. Probable developmental protein.</text>
</comment>
<comment type="subcellular location">
    <subcellularLocation>
        <location evidence="1">Secreted</location>
        <location evidence="1">Extracellular space</location>
        <location evidence="1">Extracellular matrix</location>
    </subcellularLocation>
    <subcellularLocation>
        <location evidence="1">Secreted</location>
    </subcellularLocation>
</comment>
<comment type="PTM">
    <text evidence="2">Palmitoleoylated by porcupine. The lipid group functions as a sorting signal, targeting the ligand to polarized vesicles that transport WNT-1 to unique sites at the cell surface. Depalmitoleoylated by notum, leading to inhibit Wnt signaling pathway.</text>
</comment>
<comment type="similarity">
    <text evidence="7">Belongs to the Wnt family.</text>
</comment>
<accession>P49340</accession>
<protein>
    <recommendedName>
        <fullName>Protein Wnt-1</fullName>
    </recommendedName>
</protein>
<proteinExistence type="evidence at transcript level"/>
<feature type="signal peptide" evidence="6">
    <location>
        <begin position="1"/>
        <end position="16"/>
    </location>
</feature>
<feature type="chain" id="PRO_0000041481" description="Protein Wnt-1">
    <location>
        <begin position="17"/>
        <end position="392"/>
    </location>
</feature>
<feature type="lipid moiety-binding region" description="O-palmitoleoyl serine; by PORCN" evidence="4">
    <location>
        <position position="233"/>
    </location>
</feature>
<feature type="glycosylation site" description="N-linked (GlcNAc...) asparagine" evidence="6">
    <location>
        <position position="99"/>
    </location>
</feature>
<feature type="glycosylation site" description="N-linked (GlcNAc...) asparagine" evidence="6">
    <location>
        <position position="338"/>
    </location>
</feature>
<feature type="glycosylation site" description="N-linked (GlcNAc...) asparagine" evidence="6">
    <location>
        <position position="368"/>
    </location>
</feature>
<feature type="disulfide bond" evidence="3">
    <location>
        <begin position="89"/>
        <end position="100"/>
    </location>
</feature>
<feature type="disulfide bond" evidence="3">
    <location>
        <begin position="142"/>
        <end position="150"/>
    </location>
</feature>
<feature type="disulfide bond" evidence="3">
    <location>
        <begin position="152"/>
        <end position="179"/>
    </location>
</feature>
<feature type="disulfide bond" evidence="3">
    <location>
        <begin position="227"/>
        <end position="241"/>
    </location>
</feature>
<feature type="disulfide bond" evidence="3">
    <location>
        <begin position="229"/>
        <end position="236"/>
    </location>
</feature>
<feature type="disulfide bond" evidence="3">
    <location>
        <begin position="321"/>
        <end position="352"/>
    </location>
</feature>
<feature type="disulfide bond" evidence="3">
    <location>
        <begin position="337"/>
        <end position="347"/>
    </location>
</feature>
<feature type="disulfide bond" evidence="3">
    <location>
        <begin position="351"/>
        <end position="391"/>
    </location>
</feature>
<feature type="disulfide bond" evidence="3">
    <location>
        <begin position="367"/>
        <end position="382"/>
    </location>
</feature>
<feature type="disulfide bond" evidence="3">
    <location>
        <begin position="369"/>
        <end position="379"/>
    </location>
</feature>
<feature type="disulfide bond" evidence="3">
    <location>
        <begin position="374"/>
        <end position="375"/>
    </location>
</feature>
<name>WNT1_BOMMO</name>
<dbReference type="EMBL" id="D14169">
    <property type="protein sequence ID" value="BAA03211.1"/>
    <property type="molecule type" value="mRNA"/>
</dbReference>
<dbReference type="RefSeq" id="NP_001037315.1">
    <property type="nucleotide sequence ID" value="NM_001043850.1"/>
</dbReference>
<dbReference type="SMR" id="P49340"/>
<dbReference type="FunCoup" id="P49340">
    <property type="interactions" value="166"/>
</dbReference>
<dbReference type="STRING" id="7091.P49340"/>
<dbReference type="GlyCosmos" id="P49340">
    <property type="glycosylation" value="3 sites, No reported glycans"/>
</dbReference>
<dbReference type="EnsemblMetazoa" id="NM_001043850.1">
    <property type="protein sequence ID" value="NP_001037315.1"/>
    <property type="gene ID" value="GeneID_692745"/>
</dbReference>
<dbReference type="GeneID" id="692745"/>
<dbReference type="KEGG" id="bmor:692745"/>
<dbReference type="CTD" id="474168"/>
<dbReference type="InParanoid" id="P49340"/>
<dbReference type="OrthoDB" id="545676at7088"/>
<dbReference type="Proteomes" id="UP000005204">
    <property type="component" value="Unassembled WGS sequence"/>
</dbReference>
<dbReference type="GO" id="GO:0005615">
    <property type="term" value="C:extracellular space"/>
    <property type="evidence" value="ECO:0007669"/>
    <property type="project" value="TreeGrafter"/>
</dbReference>
<dbReference type="GO" id="GO:0005125">
    <property type="term" value="F:cytokine activity"/>
    <property type="evidence" value="ECO:0007669"/>
    <property type="project" value="TreeGrafter"/>
</dbReference>
<dbReference type="GO" id="GO:0005109">
    <property type="term" value="F:frizzled binding"/>
    <property type="evidence" value="ECO:0007669"/>
    <property type="project" value="TreeGrafter"/>
</dbReference>
<dbReference type="GO" id="GO:0060070">
    <property type="term" value="P:canonical Wnt signaling pathway"/>
    <property type="evidence" value="ECO:0007669"/>
    <property type="project" value="TreeGrafter"/>
</dbReference>
<dbReference type="GO" id="GO:0045165">
    <property type="term" value="P:cell fate commitment"/>
    <property type="evidence" value="ECO:0007669"/>
    <property type="project" value="TreeGrafter"/>
</dbReference>
<dbReference type="GO" id="GO:0030182">
    <property type="term" value="P:neuron differentiation"/>
    <property type="evidence" value="ECO:0007669"/>
    <property type="project" value="TreeGrafter"/>
</dbReference>
<dbReference type="CDD" id="cd19333">
    <property type="entry name" value="Wnt_Wnt1"/>
    <property type="match status" value="1"/>
</dbReference>
<dbReference type="FunFam" id="3.30.2460.20:FF:000001">
    <property type="entry name" value="Wnt homolog"/>
    <property type="match status" value="1"/>
</dbReference>
<dbReference type="Gene3D" id="3.30.2460.20">
    <property type="match status" value="1"/>
</dbReference>
<dbReference type="InterPro" id="IPR005817">
    <property type="entry name" value="Wnt"/>
</dbReference>
<dbReference type="InterPro" id="IPR043158">
    <property type="entry name" value="Wnt_C"/>
</dbReference>
<dbReference type="InterPro" id="IPR018161">
    <property type="entry name" value="Wnt_CS"/>
</dbReference>
<dbReference type="PANTHER" id="PTHR12027:SF91">
    <property type="entry name" value="PROTO-ONCOGENE WNT-1"/>
    <property type="match status" value="1"/>
</dbReference>
<dbReference type="PANTHER" id="PTHR12027">
    <property type="entry name" value="WNT RELATED"/>
    <property type="match status" value="1"/>
</dbReference>
<dbReference type="Pfam" id="PF00110">
    <property type="entry name" value="wnt"/>
    <property type="match status" value="1"/>
</dbReference>
<dbReference type="PRINTS" id="PR01349">
    <property type="entry name" value="WNTPROTEIN"/>
</dbReference>
<dbReference type="SMART" id="SM00097">
    <property type="entry name" value="WNT1"/>
    <property type="match status" value="1"/>
</dbReference>
<dbReference type="PROSITE" id="PS00246">
    <property type="entry name" value="WNT1"/>
    <property type="match status" value="1"/>
</dbReference>
<reference key="1">
    <citation type="submission" date="1994-06" db="EMBL/GenBank/DDBJ databases">
        <authorList>
            <person name="Amanai K."/>
            <person name="Hui C."/>
            <person name="Kokubo H."/>
            <person name="Ueno K."/>
            <person name="Suzuki Y."/>
        </authorList>
    </citation>
    <scope>NUCLEOTIDE SEQUENCE [MRNA]</scope>
</reference>
<organism>
    <name type="scientific">Bombyx mori</name>
    <name type="common">Silk moth</name>
    <dbReference type="NCBI Taxonomy" id="7091"/>
    <lineage>
        <taxon>Eukaryota</taxon>
        <taxon>Metazoa</taxon>
        <taxon>Ecdysozoa</taxon>
        <taxon>Arthropoda</taxon>
        <taxon>Hexapoda</taxon>
        <taxon>Insecta</taxon>
        <taxon>Pterygota</taxon>
        <taxon>Neoptera</taxon>
        <taxon>Endopterygota</taxon>
        <taxon>Lepidoptera</taxon>
        <taxon>Glossata</taxon>
        <taxon>Ditrysia</taxon>
        <taxon>Bombycoidea</taxon>
        <taxon>Bombycidae</taxon>
        <taxon>Bombycinae</taxon>
        <taxon>Bombyx</taxon>
    </lineage>
</organism>